<accession>A5MZ48</accession>
<comment type="function">
    <text evidence="1">Probably deamidates glutamine residues to glutamate on methyl-accepting chemotaxis receptors (MCPs), playing an important role in chemotaxis.</text>
</comment>
<comment type="catalytic activity">
    <reaction evidence="1">
        <text>L-glutaminyl-[protein] + H2O = L-glutamyl-[protein] + NH4(+)</text>
        <dbReference type="Rhea" id="RHEA:16441"/>
        <dbReference type="Rhea" id="RHEA-COMP:10207"/>
        <dbReference type="Rhea" id="RHEA-COMP:10208"/>
        <dbReference type="ChEBI" id="CHEBI:15377"/>
        <dbReference type="ChEBI" id="CHEBI:28938"/>
        <dbReference type="ChEBI" id="CHEBI:29973"/>
        <dbReference type="ChEBI" id="CHEBI:30011"/>
        <dbReference type="EC" id="3.5.1.44"/>
    </reaction>
</comment>
<comment type="similarity">
    <text evidence="1">Belongs to the CheD family.</text>
</comment>
<organism>
    <name type="scientific">Clostridium kluyveri (strain ATCC 8527 / DSM 555 / NBRC 12016 / NCIMB 10680 / K1)</name>
    <dbReference type="NCBI Taxonomy" id="431943"/>
    <lineage>
        <taxon>Bacteria</taxon>
        <taxon>Bacillati</taxon>
        <taxon>Bacillota</taxon>
        <taxon>Clostridia</taxon>
        <taxon>Eubacteriales</taxon>
        <taxon>Clostridiaceae</taxon>
        <taxon>Clostridium</taxon>
    </lineage>
</organism>
<name>CHED_CLOK5</name>
<gene>
    <name evidence="1" type="primary">cheD</name>
    <name type="ordered locus">CKL_2132</name>
</gene>
<feature type="chain" id="PRO_1000087451" description="Probable chemoreceptor glutamine deamidase CheD">
    <location>
        <begin position="1"/>
        <end position="162"/>
    </location>
</feature>
<reference key="1">
    <citation type="journal article" date="2008" name="Proc. Natl. Acad. Sci. U.S.A.">
        <title>The genome of Clostridium kluyveri, a strict anaerobe with unique metabolic features.</title>
        <authorList>
            <person name="Seedorf H."/>
            <person name="Fricke W.F."/>
            <person name="Veith B."/>
            <person name="Brueggemann H."/>
            <person name="Liesegang H."/>
            <person name="Strittmatter A."/>
            <person name="Miethke M."/>
            <person name="Buckel W."/>
            <person name="Hinderberger J."/>
            <person name="Li F."/>
            <person name="Hagemeier C."/>
            <person name="Thauer R.K."/>
            <person name="Gottschalk G."/>
        </authorList>
    </citation>
    <scope>NUCLEOTIDE SEQUENCE [LARGE SCALE GENOMIC DNA]</scope>
    <source>
        <strain>ATCC 8527 / DSM 555 / NBRC 12016 / NCIMB 10680 / K1</strain>
    </source>
</reference>
<protein>
    <recommendedName>
        <fullName evidence="1">Probable chemoreceptor glutamine deamidase CheD</fullName>
        <ecNumber evidence="1">3.5.1.44</ecNumber>
    </recommendedName>
</protein>
<sequence>MEIKEIKVGIADMNTAGSPHRLITIGLGSCVGIALYDKVKGIGGLAHIMLPDSTQFSNIKNPVKFADLAVPLLIKDLEKLGVNKRNLKAKIAGGASMFNFSDKSMIMDIGNRNSAAVKKILEKCSVPILSEDLGGNKGRTMIFDTSQGGVKIRTVGMGIKEI</sequence>
<proteinExistence type="inferred from homology"/>
<keyword id="KW-0145">Chemotaxis</keyword>
<keyword id="KW-0378">Hydrolase</keyword>
<keyword id="KW-1185">Reference proteome</keyword>
<dbReference type="EC" id="3.5.1.44" evidence="1"/>
<dbReference type="EMBL" id="CP000673">
    <property type="protein sequence ID" value="EDK34144.1"/>
    <property type="molecule type" value="Genomic_DNA"/>
</dbReference>
<dbReference type="RefSeq" id="WP_012102471.1">
    <property type="nucleotide sequence ID" value="NC_009706.1"/>
</dbReference>
<dbReference type="SMR" id="A5MZ48"/>
<dbReference type="STRING" id="431943.CKL_2132"/>
<dbReference type="KEGG" id="ckl:CKL_2132"/>
<dbReference type="eggNOG" id="COG1871">
    <property type="taxonomic scope" value="Bacteria"/>
</dbReference>
<dbReference type="HOGENOM" id="CLU_087854_2_0_9"/>
<dbReference type="Proteomes" id="UP000002411">
    <property type="component" value="Chromosome"/>
</dbReference>
<dbReference type="GO" id="GO:0050568">
    <property type="term" value="F:protein-glutamine glutaminase activity"/>
    <property type="evidence" value="ECO:0007669"/>
    <property type="project" value="UniProtKB-UniRule"/>
</dbReference>
<dbReference type="GO" id="GO:0006935">
    <property type="term" value="P:chemotaxis"/>
    <property type="evidence" value="ECO:0007669"/>
    <property type="project" value="UniProtKB-UniRule"/>
</dbReference>
<dbReference type="CDD" id="cd16352">
    <property type="entry name" value="CheD"/>
    <property type="match status" value="1"/>
</dbReference>
<dbReference type="Gene3D" id="3.30.1330.200">
    <property type="match status" value="1"/>
</dbReference>
<dbReference type="HAMAP" id="MF_01440">
    <property type="entry name" value="CheD"/>
    <property type="match status" value="1"/>
</dbReference>
<dbReference type="InterPro" id="IPR038592">
    <property type="entry name" value="CheD-like_sf"/>
</dbReference>
<dbReference type="InterPro" id="IPR005659">
    <property type="entry name" value="Chemorcpt_Glu_NH3ase_CheD"/>
</dbReference>
<dbReference type="InterPro" id="IPR011324">
    <property type="entry name" value="Cytotoxic_necrot_fac-like_cat"/>
</dbReference>
<dbReference type="NCBIfam" id="NF010015">
    <property type="entry name" value="PRK13490.1"/>
    <property type="match status" value="1"/>
</dbReference>
<dbReference type="PANTHER" id="PTHR35147">
    <property type="entry name" value="CHEMORECEPTOR GLUTAMINE DEAMIDASE CHED-RELATED"/>
    <property type="match status" value="1"/>
</dbReference>
<dbReference type="PANTHER" id="PTHR35147:SF1">
    <property type="entry name" value="CHEMORECEPTOR GLUTAMINE DEAMIDASE CHED-RELATED"/>
    <property type="match status" value="1"/>
</dbReference>
<dbReference type="Pfam" id="PF03975">
    <property type="entry name" value="CheD"/>
    <property type="match status" value="1"/>
</dbReference>
<dbReference type="SUPFAM" id="SSF64438">
    <property type="entry name" value="CNF1/YfiH-like putative cysteine hydrolases"/>
    <property type="match status" value="1"/>
</dbReference>
<evidence type="ECO:0000255" key="1">
    <source>
        <dbReference type="HAMAP-Rule" id="MF_01440"/>
    </source>
</evidence>